<gene>
    <name evidence="1" type="primary">rplS</name>
    <name type="ordered locus">Athe_0972</name>
</gene>
<evidence type="ECO:0000255" key="1">
    <source>
        <dbReference type="HAMAP-Rule" id="MF_00402"/>
    </source>
</evidence>
<evidence type="ECO:0000305" key="2"/>
<dbReference type="EMBL" id="CP001393">
    <property type="protein sequence ID" value="ACM60074.1"/>
    <property type="molecule type" value="Genomic_DNA"/>
</dbReference>
<dbReference type="RefSeq" id="WP_013430653.1">
    <property type="nucleotide sequence ID" value="NC_012034.1"/>
</dbReference>
<dbReference type="SMR" id="B9MQX0"/>
<dbReference type="STRING" id="521460.Athe_0972"/>
<dbReference type="GeneID" id="31772324"/>
<dbReference type="KEGG" id="ate:Athe_0972"/>
<dbReference type="eggNOG" id="COG0335">
    <property type="taxonomic scope" value="Bacteria"/>
</dbReference>
<dbReference type="HOGENOM" id="CLU_103507_2_1_9"/>
<dbReference type="Proteomes" id="UP000007723">
    <property type="component" value="Chromosome"/>
</dbReference>
<dbReference type="GO" id="GO:0022625">
    <property type="term" value="C:cytosolic large ribosomal subunit"/>
    <property type="evidence" value="ECO:0007669"/>
    <property type="project" value="TreeGrafter"/>
</dbReference>
<dbReference type="GO" id="GO:0003735">
    <property type="term" value="F:structural constituent of ribosome"/>
    <property type="evidence" value="ECO:0007669"/>
    <property type="project" value="InterPro"/>
</dbReference>
<dbReference type="GO" id="GO:0006412">
    <property type="term" value="P:translation"/>
    <property type="evidence" value="ECO:0007669"/>
    <property type="project" value="UniProtKB-UniRule"/>
</dbReference>
<dbReference type="FunFam" id="2.30.30.790:FF:000001">
    <property type="entry name" value="50S ribosomal protein L19"/>
    <property type="match status" value="1"/>
</dbReference>
<dbReference type="Gene3D" id="2.30.30.790">
    <property type="match status" value="1"/>
</dbReference>
<dbReference type="HAMAP" id="MF_00402">
    <property type="entry name" value="Ribosomal_bL19"/>
    <property type="match status" value="1"/>
</dbReference>
<dbReference type="InterPro" id="IPR001857">
    <property type="entry name" value="Ribosomal_bL19"/>
</dbReference>
<dbReference type="InterPro" id="IPR018257">
    <property type="entry name" value="Ribosomal_bL19_CS"/>
</dbReference>
<dbReference type="InterPro" id="IPR038657">
    <property type="entry name" value="Ribosomal_bL19_sf"/>
</dbReference>
<dbReference type="InterPro" id="IPR008991">
    <property type="entry name" value="Translation_prot_SH3-like_sf"/>
</dbReference>
<dbReference type="NCBIfam" id="TIGR01024">
    <property type="entry name" value="rplS_bact"/>
    <property type="match status" value="1"/>
</dbReference>
<dbReference type="PANTHER" id="PTHR15680:SF9">
    <property type="entry name" value="LARGE RIBOSOMAL SUBUNIT PROTEIN BL19M"/>
    <property type="match status" value="1"/>
</dbReference>
<dbReference type="PANTHER" id="PTHR15680">
    <property type="entry name" value="RIBOSOMAL PROTEIN L19"/>
    <property type="match status" value="1"/>
</dbReference>
<dbReference type="Pfam" id="PF01245">
    <property type="entry name" value="Ribosomal_L19"/>
    <property type="match status" value="1"/>
</dbReference>
<dbReference type="PIRSF" id="PIRSF002191">
    <property type="entry name" value="Ribosomal_L19"/>
    <property type="match status" value="1"/>
</dbReference>
<dbReference type="PRINTS" id="PR00061">
    <property type="entry name" value="RIBOSOMALL19"/>
</dbReference>
<dbReference type="SUPFAM" id="SSF50104">
    <property type="entry name" value="Translation proteins SH3-like domain"/>
    <property type="match status" value="1"/>
</dbReference>
<dbReference type="PROSITE" id="PS01015">
    <property type="entry name" value="RIBOSOMAL_L19"/>
    <property type="match status" value="1"/>
</dbReference>
<keyword id="KW-0687">Ribonucleoprotein</keyword>
<keyword id="KW-0689">Ribosomal protein</keyword>
<reference key="1">
    <citation type="submission" date="2009-01" db="EMBL/GenBank/DDBJ databases">
        <title>Complete sequence of chromosome of Caldicellulosiruptor becscii DSM 6725.</title>
        <authorList>
            <person name="Lucas S."/>
            <person name="Copeland A."/>
            <person name="Lapidus A."/>
            <person name="Glavina del Rio T."/>
            <person name="Tice H."/>
            <person name="Bruce D."/>
            <person name="Goodwin L."/>
            <person name="Pitluck S."/>
            <person name="Sims D."/>
            <person name="Meincke L."/>
            <person name="Brettin T."/>
            <person name="Detter J.C."/>
            <person name="Han C."/>
            <person name="Larimer F."/>
            <person name="Land M."/>
            <person name="Hauser L."/>
            <person name="Kyrpides N."/>
            <person name="Ovchinnikova G."/>
            <person name="Kataeva I."/>
            <person name="Adams M.W.W."/>
        </authorList>
    </citation>
    <scope>NUCLEOTIDE SEQUENCE [LARGE SCALE GENOMIC DNA]</scope>
    <source>
        <strain>ATCC BAA-1888 / DSM 6725 / KCTC 15123 / Z-1320</strain>
    </source>
</reference>
<protein>
    <recommendedName>
        <fullName evidence="1">Large ribosomal subunit protein bL19</fullName>
    </recommendedName>
    <alternativeName>
        <fullName evidence="2">50S ribosomal protein L19</fullName>
    </alternativeName>
</protein>
<sequence>MDIIREIESEMLRKDIPDFKPGDTVRVYFKVIEGGRERVQAFEGLVIKRRGKGLSETFTVRRISYGIGVERVFPLHSPRLEKIEVIRRGKVRRAKLYYIREKIGKAAKIKELVQQPDKENNNTEETNA</sequence>
<feature type="chain" id="PRO_1000193785" description="Large ribosomal subunit protein bL19">
    <location>
        <begin position="1"/>
        <end position="128"/>
    </location>
</feature>
<comment type="function">
    <text evidence="1">This protein is located at the 30S-50S ribosomal subunit interface and may play a role in the structure and function of the aminoacyl-tRNA binding site.</text>
</comment>
<comment type="similarity">
    <text evidence="1">Belongs to the bacterial ribosomal protein bL19 family.</text>
</comment>
<proteinExistence type="inferred from homology"/>
<organism>
    <name type="scientific">Caldicellulosiruptor bescii (strain ATCC BAA-1888 / DSM 6725 / KCTC 15123 / Z-1320)</name>
    <name type="common">Anaerocellum thermophilum</name>
    <dbReference type="NCBI Taxonomy" id="521460"/>
    <lineage>
        <taxon>Bacteria</taxon>
        <taxon>Bacillati</taxon>
        <taxon>Bacillota</taxon>
        <taxon>Bacillota incertae sedis</taxon>
        <taxon>Caldicellulosiruptorales</taxon>
        <taxon>Caldicellulosiruptoraceae</taxon>
        <taxon>Caldicellulosiruptor</taxon>
    </lineage>
</organism>
<name>RL19_CALBD</name>
<accession>B9MQX0</accession>